<protein>
    <recommendedName>
        <fullName evidence="5">ATP-dependent rRNA helicase RRP3</fullName>
        <ecNumber evidence="1">3.6.4.13</ecNumber>
    </recommendedName>
</protein>
<proteinExistence type="inferred from homology"/>
<feature type="chain" id="PRO_0000410261" description="ATP-dependent rRNA helicase RRP3">
    <location>
        <begin position="1"/>
        <end position="484"/>
    </location>
</feature>
<feature type="domain" description="Helicase ATP-binding" evidence="2">
    <location>
        <begin position="69"/>
        <end position="240"/>
    </location>
</feature>
<feature type="domain" description="Helicase C-terminal" evidence="3">
    <location>
        <begin position="263"/>
        <end position="411"/>
    </location>
</feature>
<feature type="region of interest" description="Disordered" evidence="4">
    <location>
        <begin position="1"/>
        <end position="38"/>
    </location>
</feature>
<feature type="region of interest" description="Disordered" evidence="4">
    <location>
        <begin position="425"/>
        <end position="484"/>
    </location>
</feature>
<feature type="short sequence motif" description="Q motif" evidence="5">
    <location>
        <begin position="38"/>
        <end position="66"/>
    </location>
</feature>
<feature type="short sequence motif" description="DEAD box" evidence="5">
    <location>
        <begin position="188"/>
        <end position="191"/>
    </location>
</feature>
<feature type="compositionally biased region" description="Low complexity" evidence="4">
    <location>
        <begin position="1"/>
        <end position="14"/>
    </location>
</feature>
<feature type="compositionally biased region" description="Low complexity" evidence="4">
    <location>
        <begin position="22"/>
        <end position="34"/>
    </location>
</feature>
<feature type="compositionally biased region" description="Basic residues" evidence="4">
    <location>
        <begin position="439"/>
        <end position="448"/>
    </location>
</feature>
<feature type="compositionally biased region" description="Basic residues" evidence="4">
    <location>
        <begin position="468"/>
        <end position="484"/>
    </location>
</feature>
<feature type="binding site" evidence="2">
    <location>
        <begin position="82"/>
        <end position="89"/>
    </location>
    <ligand>
        <name>ATP</name>
        <dbReference type="ChEBI" id="CHEBI:30616"/>
    </ligand>
</feature>
<dbReference type="EC" id="3.6.4.13" evidence="1"/>
<dbReference type="EMBL" id="AAEY01000042">
    <property type="protein sequence ID" value="EAL19173.1"/>
    <property type="molecule type" value="Genomic_DNA"/>
</dbReference>
<dbReference type="RefSeq" id="XP_773820.1">
    <property type="nucleotide sequence ID" value="XM_768727.1"/>
</dbReference>
<dbReference type="SMR" id="P0CR01"/>
<dbReference type="EnsemblFungi" id="AAW45582">
    <property type="protein sequence ID" value="AAW45582"/>
    <property type="gene ID" value="CNI02850"/>
</dbReference>
<dbReference type="GeneID" id="4937795"/>
<dbReference type="KEGG" id="cnb:CNBH2720"/>
<dbReference type="VEuPathDB" id="FungiDB:CNBH2720"/>
<dbReference type="HOGENOM" id="CLU_003041_1_1_1"/>
<dbReference type="OrthoDB" id="7278at5206"/>
<dbReference type="GO" id="GO:0005829">
    <property type="term" value="C:cytosol"/>
    <property type="evidence" value="ECO:0007669"/>
    <property type="project" value="TreeGrafter"/>
</dbReference>
<dbReference type="GO" id="GO:0005730">
    <property type="term" value="C:nucleolus"/>
    <property type="evidence" value="ECO:0007669"/>
    <property type="project" value="EnsemblFungi"/>
</dbReference>
<dbReference type="GO" id="GO:0032040">
    <property type="term" value="C:small-subunit processome"/>
    <property type="evidence" value="ECO:0007669"/>
    <property type="project" value="EnsemblFungi"/>
</dbReference>
<dbReference type="GO" id="GO:0005524">
    <property type="term" value="F:ATP binding"/>
    <property type="evidence" value="ECO:0007669"/>
    <property type="project" value="UniProtKB-KW"/>
</dbReference>
<dbReference type="GO" id="GO:0016887">
    <property type="term" value="F:ATP hydrolysis activity"/>
    <property type="evidence" value="ECO:0007669"/>
    <property type="project" value="RHEA"/>
</dbReference>
<dbReference type="GO" id="GO:0003723">
    <property type="term" value="F:RNA binding"/>
    <property type="evidence" value="ECO:0007669"/>
    <property type="project" value="UniProtKB-KW"/>
</dbReference>
<dbReference type="GO" id="GO:0003724">
    <property type="term" value="F:RNA helicase activity"/>
    <property type="evidence" value="ECO:0007669"/>
    <property type="project" value="UniProtKB-EC"/>
</dbReference>
<dbReference type="GO" id="GO:0000462">
    <property type="term" value="P:maturation of SSU-rRNA from tricistronic rRNA transcript (SSU-rRNA, 5.8S rRNA, LSU-rRNA)"/>
    <property type="evidence" value="ECO:0007669"/>
    <property type="project" value="EnsemblFungi"/>
</dbReference>
<dbReference type="CDD" id="cd17954">
    <property type="entry name" value="DEADc_DDX47"/>
    <property type="match status" value="1"/>
</dbReference>
<dbReference type="CDD" id="cd18787">
    <property type="entry name" value="SF2_C_DEAD"/>
    <property type="match status" value="1"/>
</dbReference>
<dbReference type="Gene3D" id="3.40.50.300">
    <property type="entry name" value="P-loop containing nucleotide triphosphate hydrolases"/>
    <property type="match status" value="2"/>
</dbReference>
<dbReference type="InterPro" id="IPR044765">
    <property type="entry name" value="DDX47/Rrp3_DEADc"/>
</dbReference>
<dbReference type="InterPro" id="IPR011545">
    <property type="entry name" value="DEAD/DEAH_box_helicase_dom"/>
</dbReference>
<dbReference type="InterPro" id="IPR050079">
    <property type="entry name" value="DEAD_box_RNA_helicase"/>
</dbReference>
<dbReference type="InterPro" id="IPR014001">
    <property type="entry name" value="Helicase_ATP-bd"/>
</dbReference>
<dbReference type="InterPro" id="IPR001650">
    <property type="entry name" value="Helicase_C-like"/>
</dbReference>
<dbReference type="InterPro" id="IPR027417">
    <property type="entry name" value="P-loop_NTPase"/>
</dbReference>
<dbReference type="InterPro" id="IPR000629">
    <property type="entry name" value="RNA-helicase_DEAD-box_CS"/>
</dbReference>
<dbReference type="InterPro" id="IPR014014">
    <property type="entry name" value="RNA_helicase_DEAD_Q_motif"/>
</dbReference>
<dbReference type="PANTHER" id="PTHR47959:SF24">
    <property type="entry name" value="ATP-DEPENDENT RNA HELICASE"/>
    <property type="match status" value="1"/>
</dbReference>
<dbReference type="PANTHER" id="PTHR47959">
    <property type="entry name" value="ATP-DEPENDENT RNA HELICASE RHLE-RELATED"/>
    <property type="match status" value="1"/>
</dbReference>
<dbReference type="Pfam" id="PF00270">
    <property type="entry name" value="DEAD"/>
    <property type="match status" value="1"/>
</dbReference>
<dbReference type="Pfam" id="PF00271">
    <property type="entry name" value="Helicase_C"/>
    <property type="match status" value="1"/>
</dbReference>
<dbReference type="SMART" id="SM00487">
    <property type="entry name" value="DEXDc"/>
    <property type="match status" value="1"/>
</dbReference>
<dbReference type="SMART" id="SM00490">
    <property type="entry name" value="HELICc"/>
    <property type="match status" value="1"/>
</dbReference>
<dbReference type="SUPFAM" id="SSF52540">
    <property type="entry name" value="P-loop containing nucleoside triphosphate hydrolases"/>
    <property type="match status" value="1"/>
</dbReference>
<dbReference type="PROSITE" id="PS00039">
    <property type="entry name" value="DEAD_ATP_HELICASE"/>
    <property type="match status" value="1"/>
</dbReference>
<dbReference type="PROSITE" id="PS51192">
    <property type="entry name" value="HELICASE_ATP_BIND_1"/>
    <property type="match status" value="1"/>
</dbReference>
<dbReference type="PROSITE" id="PS51194">
    <property type="entry name" value="HELICASE_CTER"/>
    <property type="match status" value="1"/>
</dbReference>
<dbReference type="PROSITE" id="PS51195">
    <property type="entry name" value="Q_MOTIF"/>
    <property type="match status" value="1"/>
</dbReference>
<organism>
    <name type="scientific">Cryptococcus neoformans var. neoformans serotype D (strain B-3501A)</name>
    <name type="common">Filobasidiella neoformans</name>
    <dbReference type="NCBI Taxonomy" id="283643"/>
    <lineage>
        <taxon>Eukaryota</taxon>
        <taxon>Fungi</taxon>
        <taxon>Dikarya</taxon>
        <taxon>Basidiomycota</taxon>
        <taxon>Agaricomycotina</taxon>
        <taxon>Tremellomycetes</taxon>
        <taxon>Tremellales</taxon>
        <taxon>Cryptococcaceae</taxon>
        <taxon>Cryptococcus</taxon>
        <taxon>Cryptococcus neoformans species complex</taxon>
    </lineage>
</organism>
<keyword id="KW-0067">ATP-binding</keyword>
<keyword id="KW-0347">Helicase</keyword>
<keyword id="KW-0378">Hydrolase</keyword>
<keyword id="KW-0547">Nucleotide-binding</keyword>
<keyword id="KW-0539">Nucleus</keyword>
<keyword id="KW-0690">Ribosome biogenesis</keyword>
<keyword id="KW-0694">RNA-binding</keyword>
<keyword id="KW-0698">rRNA processing</keyword>
<accession>P0CR01</accession>
<accession>Q55N12</accession>
<accession>Q5KBE2</accession>
<gene>
    <name evidence="1" type="primary">RRP3</name>
    <name type="ordered locus">CNBH2720</name>
</gene>
<name>RRP3_CRYNB</name>
<sequence length="484" mass="52563">MPSPSPEASSSMSQPGPPSRSPSPASSNPDAPEASHNKTFADLGISPELCRACASMGFKKPSDIQAEAIPHALEGKDIIGLAQTGSGKTAAFSLPILQTLWENPQPFFALVLAPTRELAYQISQQVTSLGSGIGVRTAVLVGGMDMMSQSIALSKRPHIIVATPGRLMDHLENTKGFSLKSLKYLVMDEADRLLDLDFGPIIDKILKVIPKERNTYLFSATMTTKVAKLQRASLNKPVRVEVSSKYSTVSTLLQHYLLLPLKNKDAYLLYLANELSSSSMMIFTRTVADSQRLSIILRRLGFPAIPLHGQMTQSLRLASLNKFKSGGRSILVATDVASRGLDIPLVDLVINYDMPTNSKDYVHRVGRTARAGRSGKSITLVTQYDVEILQRIESHIGKKMTSFDVDKEAVALLTDTVAKANREAALEMRESGTGGGGGKRGRDKGKRKTFGDGDDRDRDDDVVEAGVPRKKNKFTPGGKKKARK</sequence>
<evidence type="ECO:0000250" key="1">
    <source>
        <dbReference type="UniProtKB" id="P38712"/>
    </source>
</evidence>
<evidence type="ECO:0000255" key="2">
    <source>
        <dbReference type="PROSITE-ProRule" id="PRU00541"/>
    </source>
</evidence>
<evidence type="ECO:0000255" key="3">
    <source>
        <dbReference type="PROSITE-ProRule" id="PRU00542"/>
    </source>
</evidence>
<evidence type="ECO:0000256" key="4">
    <source>
        <dbReference type="SAM" id="MobiDB-lite"/>
    </source>
</evidence>
<evidence type="ECO:0000305" key="5"/>
<reference key="1">
    <citation type="journal article" date="2005" name="Science">
        <title>The genome of the basidiomycetous yeast and human pathogen Cryptococcus neoformans.</title>
        <authorList>
            <person name="Loftus B.J."/>
            <person name="Fung E."/>
            <person name="Roncaglia P."/>
            <person name="Rowley D."/>
            <person name="Amedeo P."/>
            <person name="Bruno D."/>
            <person name="Vamathevan J."/>
            <person name="Miranda M."/>
            <person name="Anderson I.J."/>
            <person name="Fraser J.A."/>
            <person name="Allen J.E."/>
            <person name="Bosdet I.E."/>
            <person name="Brent M.R."/>
            <person name="Chiu R."/>
            <person name="Doering T.L."/>
            <person name="Donlin M.J."/>
            <person name="D'Souza C.A."/>
            <person name="Fox D.S."/>
            <person name="Grinberg V."/>
            <person name="Fu J."/>
            <person name="Fukushima M."/>
            <person name="Haas B.J."/>
            <person name="Huang J.C."/>
            <person name="Janbon G."/>
            <person name="Jones S.J.M."/>
            <person name="Koo H.L."/>
            <person name="Krzywinski M.I."/>
            <person name="Kwon-Chung K.J."/>
            <person name="Lengeler K.B."/>
            <person name="Maiti R."/>
            <person name="Marra M.A."/>
            <person name="Marra R.E."/>
            <person name="Mathewson C.A."/>
            <person name="Mitchell T.G."/>
            <person name="Pertea M."/>
            <person name="Riggs F.R."/>
            <person name="Salzberg S.L."/>
            <person name="Schein J.E."/>
            <person name="Shvartsbeyn A."/>
            <person name="Shin H."/>
            <person name="Shumway M."/>
            <person name="Specht C.A."/>
            <person name="Suh B.B."/>
            <person name="Tenney A."/>
            <person name="Utterback T.R."/>
            <person name="Wickes B.L."/>
            <person name="Wortman J.R."/>
            <person name="Wye N.H."/>
            <person name="Kronstad J.W."/>
            <person name="Lodge J.K."/>
            <person name="Heitman J."/>
            <person name="Davis R.W."/>
            <person name="Fraser C.M."/>
            <person name="Hyman R.W."/>
        </authorList>
    </citation>
    <scope>NUCLEOTIDE SEQUENCE [LARGE SCALE GENOMIC DNA]</scope>
    <source>
        <strain>B-3501A</strain>
    </source>
</reference>
<comment type="function">
    <text evidence="1">ATP-dependent rRNA helicase required for pre-ribosomal RNA processing. Involved in the maturation of the 35S-pre-rRNA and to its cleavage to mature 18S rRNA.</text>
</comment>
<comment type="catalytic activity">
    <reaction evidence="1">
        <text>ATP + H2O = ADP + phosphate + H(+)</text>
        <dbReference type="Rhea" id="RHEA:13065"/>
        <dbReference type="ChEBI" id="CHEBI:15377"/>
        <dbReference type="ChEBI" id="CHEBI:15378"/>
        <dbReference type="ChEBI" id="CHEBI:30616"/>
        <dbReference type="ChEBI" id="CHEBI:43474"/>
        <dbReference type="ChEBI" id="CHEBI:456216"/>
        <dbReference type="EC" id="3.6.4.13"/>
    </reaction>
</comment>
<comment type="subunit">
    <text evidence="1">Interacts with the SSU processome.</text>
</comment>
<comment type="subcellular location">
    <subcellularLocation>
        <location evidence="5">Nucleus</location>
    </subcellularLocation>
</comment>
<comment type="domain">
    <text evidence="5">The Q motif is unique to and characteristic of the DEAD box family of RNA helicases and controls ATP binding and hydrolysis.</text>
</comment>
<comment type="similarity">
    <text evidence="5">Belongs to the DEAD box helicase family. DDX47/RRP3 subfamily.</text>
</comment>